<keyword id="KW-0002">3D-structure</keyword>
<keyword id="KW-0010">Activator</keyword>
<keyword id="KW-0025">Alternative splicing</keyword>
<keyword id="KW-0963">Cytoplasm</keyword>
<keyword id="KW-0446">Lipid-binding</keyword>
<keyword id="KW-0539">Nucleus</keyword>
<keyword id="KW-1267">Proteomics identification</keyword>
<keyword id="KW-1185">Reference proteome</keyword>
<keyword id="KW-0804">Transcription</keyword>
<keyword id="KW-0805">Transcription regulation</keyword>
<keyword id="KW-0813">Transport</keyword>
<evidence type="ECO:0000250" key="1"/>
<evidence type="ECO:0000250" key="2">
    <source>
        <dbReference type="UniProtKB" id="Q99J08"/>
    </source>
</evidence>
<evidence type="ECO:0000255" key="3">
    <source>
        <dbReference type="PROSITE-ProRule" id="PRU00056"/>
    </source>
</evidence>
<evidence type="ECO:0000255" key="4">
    <source>
        <dbReference type="PROSITE-ProRule" id="PRU00096"/>
    </source>
</evidence>
<evidence type="ECO:0000269" key="5">
    <source>
    </source>
</evidence>
<evidence type="ECO:0000269" key="6">
    <source>
    </source>
</evidence>
<evidence type="ECO:0000269" key="7">
    <source ref="8"/>
</evidence>
<evidence type="ECO:0000303" key="8">
    <source>
    </source>
</evidence>
<evidence type="ECO:0000303" key="9">
    <source>
    </source>
</evidence>
<evidence type="ECO:0000305" key="10"/>
<evidence type="ECO:0007829" key="11">
    <source>
        <dbReference type="PDB" id="1OLM"/>
    </source>
</evidence>
<evidence type="ECO:0007829" key="12">
    <source>
        <dbReference type="PDB" id="4OMJ"/>
    </source>
</evidence>
<comment type="function">
    <text>Carrier protein. Binds to some hydrophobic molecules and promotes their transfer between the different cellular sites. Binds with high affinity to alpha-tocopherol. Also binds with a weaker affinity to other tocopherols and to tocotrienols. May have a transcriptional activatory activity via its association with alpha-tocopherol. Probably recognizes and binds some squalene structure, suggesting that it may regulate cholesterol biosynthesis by increasing the transfer of squalene to a metabolic active pool in the cell.</text>
</comment>
<comment type="subunit">
    <text evidence="1">Monomer.</text>
</comment>
<comment type="subcellular location">
    <subcellularLocation>
        <location>Cytoplasm</location>
    </subcellularLocation>
    <subcellularLocation>
        <location>Nucleus</location>
    </subcellularLocation>
    <text>Cytoplasmic in absence of alpha-tocopherol, and nuclear in presence of alpha-tocopherol.</text>
</comment>
<comment type="alternative products">
    <event type="alternative splicing"/>
    <isoform>
        <id>O76054-1</id>
        <name>1</name>
        <sequence type="displayed"/>
    </isoform>
    <isoform>
        <id>O76054-4</id>
        <name>2</name>
        <sequence type="described" ref="VSP_042021"/>
    </isoform>
    <isoform>
        <id>O76054-5</id>
        <name>3</name>
        <sequence type="described" ref="VSP_045880"/>
    </isoform>
</comment>
<comment type="tissue specificity">
    <text evidence="5">Widely expressed. Strong expression in liver, brain and prostate.</text>
</comment>
<comment type="developmental stage">
    <text>Low expression in fetal tissues.</text>
</comment>
<comment type="sequence caution" evidence="10">
    <conflict type="erroneous initiation">
        <sequence resource="EMBL-CDS" id="BAA86500"/>
    </conflict>
</comment>
<proteinExistence type="evidence at protein level"/>
<accession>O76054</accession>
<accession>B7Z8Q1</accession>
<accession>F5H3U4</accession>
<accession>Q53EQ2</accession>
<accession>Q6PD61</accession>
<accession>Q9ULN4</accession>
<feature type="chain" id="PRO_0000210755" description="SEC14-like protein 2">
    <location>
        <begin position="1"/>
        <end position="403"/>
    </location>
</feature>
<feature type="domain" description="CRAL-TRIO" evidence="3">
    <location>
        <begin position="76"/>
        <end position="249"/>
    </location>
</feature>
<feature type="domain" description="GOLD" evidence="4">
    <location>
        <begin position="275"/>
        <end position="383"/>
    </location>
</feature>
<feature type="modified residue" description="N6-succinyllysine" evidence="2">
    <location>
        <position position="51"/>
    </location>
</feature>
<feature type="modified residue" description="N6-succinyllysine" evidence="2">
    <location>
        <position position="253"/>
    </location>
</feature>
<feature type="modified residue" description="N6-succinyllysine" evidence="2">
    <location>
        <position position="257"/>
    </location>
</feature>
<feature type="modified residue" description="N6-succinyllysine" evidence="2">
    <location>
        <position position="393"/>
    </location>
</feature>
<feature type="splice variant" id="VSP_045880" description="In isoform 3." evidence="8">
    <location>
        <begin position="58"/>
        <end position="140"/>
    </location>
</feature>
<feature type="splice variant" id="VSP_042021" description="In isoform 2." evidence="9">
    <original>YVLRFDNTYSFIHAKKVNFTVEVLLPDKASEEKMKQLGAGTPK</original>
    <variation>CKYLCLGNALKPHVQLSACEVPLPPWIFGSEC</variation>
    <location>
        <begin position="361"/>
        <end position="403"/>
    </location>
</feature>
<feature type="sequence variant" id="VAR_024626" description="In dbSNP:rs757660." evidence="6 7">
    <original>R</original>
    <variation>K</variation>
    <location>
        <position position="11"/>
    </location>
</feature>
<feature type="sequence conflict" description="In Ref. 2." evidence="10" ref="2">
    <original>Y</original>
    <variation>H</variation>
    <location>
        <position position="36"/>
    </location>
</feature>
<feature type="turn" evidence="12">
    <location>
        <begin position="5"/>
        <end position="7"/>
    </location>
</feature>
<feature type="helix" evidence="12">
    <location>
        <begin position="10"/>
        <end position="23"/>
    </location>
</feature>
<feature type="turn" evidence="12">
    <location>
        <begin position="24"/>
        <end position="26"/>
    </location>
</feature>
<feature type="helix" evidence="12">
    <location>
        <begin position="27"/>
        <end position="29"/>
    </location>
</feature>
<feature type="helix" evidence="12">
    <location>
        <begin position="35"/>
        <end position="44"/>
    </location>
</feature>
<feature type="turn" evidence="12">
    <location>
        <begin position="45"/>
        <end position="47"/>
    </location>
</feature>
<feature type="helix" evidence="12">
    <location>
        <begin position="49"/>
        <end position="65"/>
    </location>
</feature>
<feature type="helix" evidence="12">
    <location>
        <begin position="68"/>
        <end position="73"/>
    </location>
</feature>
<feature type="helix" evidence="12">
    <location>
        <begin position="78"/>
        <end position="83"/>
    </location>
</feature>
<feature type="strand" evidence="12">
    <location>
        <begin position="86"/>
        <end position="91"/>
    </location>
</feature>
<feature type="strand" evidence="12">
    <location>
        <begin position="97"/>
        <end position="102"/>
    </location>
</feature>
<feature type="helix" evidence="12">
    <location>
        <begin position="108"/>
        <end position="114"/>
    </location>
</feature>
<feature type="helix" evidence="12">
    <location>
        <begin position="117"/>
        <end position="142"/>
    </location>
</feature>
<feature type="strand" evidence="12">
    <location>
        <begin position="149"/>
        <end position="154"/>
    </location>
</feature>
<feature type="helix" evidence="12">
    <location>
        <begin position="160"/>
        <end position="163"/>
    </location>
</feature>
<feature type="helix" evidence="12">
    <location>
        <begin position="165"/>
        <end position="181"/>
    </location>
</feature>
<feature type="strand" evidence="12">
    <location>
        <begin position="186"/>
        <end position="193"/>
    </location>
</feature>
<feature type="helix" evidence="12">
    <location>
        <begin position="198"/>
        <end position="205"/>
    </location>
</feature>
<feature type="helix" evidence="12">
    <location>
        <begin position="206"/>
        <end position="208"/>
    </location>
</feature>
<feature type="helix" evidence="12">
    <location>
        <begin position="211"/>
        <end position="215"/>
    </location>
</feature>
<feature type="strand" evidence="12">
    <location>
        <begin position="217"/>
        <end position="219"/>
    </location>
</feature>
<feature type="helix" evidence="12">
    <location>
        <begin position="224"/>
        <end position="231"/>
    </location>
</feature>
<feature type="helix" evidence="12">
    <location>
        <begin position="234"/>
        <end position="236"/>
    </location>
</feature>
<feature type="helix" evidence="12">
    <location>
        <begin position="239"/>
        <end position="241"/>
    </location>
</feature>
<feature type="strand" evidence="11">
    <location>
        <begin position="243"/>
        <end position="245"/>
    </location>
</feature>
<feature type="turn" evidence="12">
    <location>
        <begin position="255"/>
        <end position="257"/>
    </location>
</feature>
<feature type="helix" evidence="12">
    <location>
        <begin position="266"/>
        <end position="268"/>
    </location>
</feature>
<feature type="strand" evidence="11">
    <location>
        <begin position="279"/>
        <end position="284"/>
    </location>
</feature>
<feature type="strand" evidence="11">
    <location>
        <begin position="289"/>
        <end position="296"/>
    </location>
</feature>
<feature type="strand" evidence="11">
    <location>
        <begin position="302"/>
        <end position="312"/>
    </location>
</feature>
<feature type="strand" evidence="11">
    <location>
        <begin position="314"/>
        <end position="320"/>
    </location>
</feature>
<feature type="strand" evidence="11">
    <location>
        <begin position="323"/>
        <end position="326"/>
    </location>
</feature>
<feature type="helix" evidence="11">
    <location>
        <begin position="330"/>
        <end position="332"/>
    </location>
</feature>
<feature type="strand" evidence="11">
    <location>
        <begin position="333"/>
        <end position="342"/>
    </location>
</feature>
<feature type="turn" evidence="11">
    <location>
        <begin position="344"/>
        <end position="346"/>
    </location>
</feature>
<feature type="strand" evidence="11">
    <location>
        <begin position="349"/>
        <end position="354"/>
    </location>
</feature>
<feature type="strand" evidence="11">
    <location>
        <begin position="359"/>
        <end position="366"/>
    </location>
</feature>
<feature type="strand" evidence="11">
    <location>
        <begin position="374"/>
        <end position="384"/>
    </location>
</feature>
<feature type="helix" evidence="11">
    <location>
        <begin position="388"/>
        <end position="395"/>
    </location>
</feature>
<sequence length="403" mass="46145">MSGRVGDLSPRQKEALAKFRENVQDVLPALPNPDDYFLLRWLRARSFDLQKSEAMLRKHVEFRKQKDIDNIISWQPPEVIQQYLSGGMCGYDLDGCPVWYDIIGPLDAKGLLFSASKQDLLRTKMRECELLLQECAHQTTKLGRKVETITIIYDCEGLGLKHLWKPAVEAYGEFLCMFEENYPETLKRLFVVKAPKLFPVAYNLIKPFLSEDTRKKIMVLGANWKEVLLKHISPDQVPVEYGGTMTDPDGNPKCKSKINYGGDIPRKYYVRDQVKQQYEHSVQISRGSSHQVEYEILFPGCVLRWQFMSDGADVGFGIFLKTKMGERQRAGEMTEVLPNQRYNSHLVPEDGTLTCSDPGIYVLRFDNTYSFIHAKKVNFTVEVLLPDKASEEKMKQLGAGTPK</sequence>
<dbReference type="EMBL" id="AL096881">
    <property type="protein sequence ID" value="CAB51405.1"/>
    <property type="molecule type" value="mRNA"/>
</dbReference>
<dbReference type="EMBL" id="AB033012">
    <property type="protein sequence ID" value="BAA86500.2"/>
    <property type="status" value="ALT_INIT"/>
    <property type="molecule type" value="mRNA"/>
</dbReference>
<dbReference type="EMBL" id="CR456571">
    <property type="protein sequence ID" value="CAG30457.1"/>
    <property type="molecule type" value="mRNA"/>
</dbReference>
<dbReference type="EMBL" id="AK303751">
    <property type="protein sequence ID" value="BAH14037.1"/>
    <property type="molecule type" value="mRNA"/>
</dbReference>
<dbReference type="EMBL" id="AK223587">
    <property type="protein sequence ID" value="BAD97307.1"/>
    <property type="molecule type" value="mRNA"/>
</dbReference>
<dbReference type="EMBL" id="AC004832">
    <property type="protein sequence ID" value="AAF19256.1"/>
    <property type="molecule type" value="Genomic_DNA"/>
</dbReference>
<dbReference type="EMBL" id="BC058915">
    <property type="protein sequence ID" value="AAH58915.1"/>
    <property type="molecule type" value="mRNA"/>
</dbReference>
<dbReference type="CCDS" id="CCDS13876.1">
    <molecule id="O76054-1"/>
</dbReference>
<dbReference type="CCDS" id="CCDS46685.1">
    <molecule id="O76054-4"/>
</dbReference>
<dbReference type="CCDS" id="CCDS56228.1">
    <molecule id="O76054-5"/>
</dbReference>
<dbReference type="PIR" id="JC7708">
    <property type="entry name" value="JC7708"/>
</dbReference>
<dbReference type="RefSeq" id="NP_001191133.1">
    <molecule id="O76054-5"/>
    <property type="nucleotide sequence ID" value="NM_001204204.3"/>
</dbReference>
<dbReference type="RefSeq" id="NP_036561.1">
    <molecule id="O76054-1"/>
    <property type="nucleotide sequence ID" value="NM_012429.5"/>
</dbReference>
<dbReference type="RefSeq" id="NP_203740.1">
    <molecule id="O76054-4"/>
    <property type="nucleotide sequence ID" value="NM_033382.3"/>
</dbReference>
<dbReference type="PDB" id="1O6U">
    <property type="method" value="X-ray"/>
    <property type="resolution" value="2.05 A"/>
    <property type="chains" value="A/C/E=1-403"/>
</dbReference>
<dbReference type="PDB" id="1OLM">
    <property type="method" value="X-ray"/>
    <property type="resolution" value="1.95 A"/>
    <property type="chains" value="A/C/E=1-403"/>
</dbReference>
<dbReference type="PDB" id="4OMJ">
    <property type="method" value="X-ray"/>
    <property type="resolution" value="1.60 A"/>
    <property type="chains" value="A/B=1-275"/>
</dbReference>
<dbReference type="PDB" id="4OMK">
    <property type="method" value="X-ray"/>
    <property type="resolution" value="1.75 A"/>
    <property type="chains" value="A/B=1-275"/>
</dbReference>
<dbReference type="PDBsum" id="1O6U"/>
<dbReference type="PDBsum" id="1OLM"/>
<dbReference type="PDBsum" id="4OMJ"/>
<dbReference type="PDBsum" id="4OMK"/>
<dbReference type="SMR" id="O76054"/>
<dbReference type="BioGRID" id="117085">
    <property type="interactions" value="25"/>
</dbReference>
<dbReference type="FunCoup" id="O76054">
    <property type="interactions" value="1531"/>
</dbReference>
<dbReference type="IntAct" id="O76054">
    <property type="interactions" value="3"/>
</dbReference>
<dbReference type="MINT" id="O76054"/>
<dbReference type="STRING" id="9606.ENSP00000478755"/>
<dbReference type="DrugBank" id="DB14003">
    <property type="generic name" value="alpha-Tocopherol acetate"/>
</dbReference>
<dbReference type="DrugBank" id="DB14001">
    <property type="generic name" value="alpha-Tocopherol succinate"/>
</dbReference>
<dbReference type="DrugBank" id="DB14002">
    <property type="generic name" value="D-alpha-Tocopherol acetate"/>
</dbReference>
<dbReference type="DrugBank" id="DB11635">
    <property type="generic name" value="Tocofersolan"/>
</dbReference>
<dbReference type="DrugBank" id="DB11251">
    <property type="generic name" value="Tocopherol"/>
</dbReference>
<dbReference type="DrugBank" id="DB00163">
    <property type="generic name" value="Vitamin E"/>
</dbReference>
<dbReference type="GlyGen" id="O76054">
    <property type="glycosylation" value="2 sites, 1 O-linked glycan (1 site)"/>
</dbReference>
<dbReference type="iPTMnet" id="O76054"/>
<dbReference type="MetOSite" id="O76054"/>
<dbReference type="PhosphoSitePlus" id="O76054"/>
<dbReference type="SwissPalm" id="O76054"/>
<dbReference type="BioMuta" id="SEC14L2"/>
<dbReference type="jPOST" id="O76054"/>
<dbReference type="MassIVE" id="O76054"/>
<dbReference type="PaxDb" id="9606-ENSP00000478755"/>
<dbReference type="PeptideAtlas" id="O76054"/>
<dbReference type="ProteomicsDB" id="26377"/>
<dbReference type="ProteomicsDB" id="50365">
    <molecule id="O76054-1"/>
</dbReference>
<dbReference type="ProteomicsDB" id="50366">
    <molecule id="O76054-4"/>
</dbReference>
<dbReference type="Pumba" id="O76054"/>
<dbReference type="Antibodypedia" id="10725">
    <property type="antibodies" value="276 antibodies from 24 providers"/>
</dbReference>
<dbReference type="DNASU" id="23541"/>
<dbReference type="Ensembl" id="ENST00000402592.7">
    <molecule id="O76054-5"/>
    <property type="protein sequence ID" value="ENSP00000383882.3"/>
    <property type="gene ID" value="ENSG00000100003.18"/>
</dbReference>
<dbReference type="Ensembl" id="ENST00000405717.7">
    <molecule id="O76054-4"/>
    <property type="protein sequence ID" value="ENSP00000385186.3"/>
    <property type="gene ID" value="ENSG00000100003.18"/>
</dbReference>
<dbReference type="Ensembl" id="ENST00000615189.5">
    <molecule id="O76054-1"/>
    <property type="protein sequence ID" value="ENSP00000478755.1"/>
    <property type="gene ID" value="ENSG00000100003.18"/>
</dbReference>
<dbReference type="GeneID" id="23541"/>
<dbReference type="KEGG" id="hsa:23541"/>
<dbReference type="MANE-Select" id="ENST00000615189.5">
    <property type="protein sequence ID" value="ENSP00000478755.1"/>
    <property type="RefSeq nucleotide sequence ID" value="NM_012429.5"/>
    <property type="RefSeq protein sequence ID" value="NP_036561.1"/>
</dbReference>
<dbReference type="UCSC" id="uc003ahq.5">
    <molecule id="O76054-1"/>
    <property type="organism name" value="human"/>
</dbReference>
<dbReference type="AGR" id="HGNC:10699"/>
<dbReference type="CTD" id="23541"/>
<dbReference type="DisGeNET" id="23541"/>
<dbReference type="GeneCards" id="SEC14L2"/>
<dbReference type="HGNC" id="HGNC:10699">
    <property type="gene designation" value="SEC14L2"/>
</dbReference>
<dbReference type="HPA" id="ENSG00000100003">
    <property type="expression patterns" value="Tissue enhanced (epididymis, liver)"/>
</dbReference>
<dbReference type="MIM" id="607558">
    <property type="type" value="gene"/>
</dbReference>
<dbReference type="neXtProt" id="NX_O76054"/>
<dbReference type="OpenTargets" id="ENSG00000100003"/>
<dbReference type="PharmGKB" id="PA35622"/>
<dbReference type="VEuPathDB" id="HostDB:ENSG00000100003"/>
<dbReference type="eggNOG" id="KOG1471">
    <property type="taxonomic scope" value="Eukaryota"/>
</dbReference>
<dbReference type="GeneTree" id="ENSGT00940000160650"/>
<dbReference type="HOGENOM" id="CLU_014001_2_1_1"/>
<dbReference type="InParanoid" id="O76054"/>
<dbReference type="OMA" id="HCYDKVG"/>
<dbReference type="OrthoDB" id="1434354at2759"/>
<dbReference type="PAN-GO" id="O76054">
    <property type="GO annotations" value="2 GO annotations based on evolutionary models"/>
</dbReference>
<dbReference type="PhylomeDB" id="O76054"/>
<dbReference type="TreeFam" id="TF313988"/>
<dbReference type="PathwayCommons" id="O76054"/>
<dbReference type="SignaLink" id="O76054"/>
<dbReference type="SIGNOR" id="O76054"/>
<dbReference type="BioGRID-ORCS" id="23541">
    <property type="hits" value="18 hits in 1156 CRISPR screens"/>
</dbReference>
<dbReference type="CD-CODE" id="FB4E32DD">
    <property type="entry name" value="Presynaptic clusters and postsynaptic densities"/>
</dbReference>
<dbReference type="ChiTaRS" id="SEC14L2">
    <property type="organism name" value="human"/>
</dbReference>
<dbReference type="EvolutionaryTrace" id="O76054"/>
<dbReference type="GeneWiki" id="SEC14L2"/>
<dbReference type="GenomeRNAi" id="23541"/>
<dbReference type="Pharos" id="O76054">
    <property type="development level" value="Tbio"/>
</dbReference>
<dbReference type="PRO" id="PR:O76054"/>
<dbReference type="Proteomes" id="UP000005640">
    <property type="component" value="Chromosome 22"/>
</dbReference>
<dbReference type="RNAct" id="O76054">
    <property type="molecule type" value="protein"/>
</dbReference>
<dbReference type="Bgee" id="ENSG00000100003">
    <property type="expression patterns" value="Expressed in right lobe of liver and 133 other cell types or tissues"/>
</dbReference>
<dbReference type="ExpressionAtlas" id="O76054">
    <property type="expression patterns" value="baseline and differential"/>
</dbReference>
<dbReference type="GO" id="GO:0005737">
    <property type="term" value="C:cytoplasm"/>
    <property type="evidence" value="ECO:0000318"/>
    <property type="project" value="GO_Central"/>
</dbReference>
<dbReference type="GO" id="GO:0005829">
    <property type="term" value="C:cytosol"/>
    <property type="evidence" value="ECO:0000314"/>
    <property type="project" value="HPA"/>
</dbReference>
<dbReference type="GO" id="GO:0070062">
    <property type="term" value="C:extracellular exosome"/>
    <property type="evidence" value="ECO:0007005"/>
    <property type="project" value="UniProtKB"/>
</dbReference>
<dbReference type="GO" id="GO:0005654">
    <property type="term" value="C:nucleoplasm"/>
    <property type="evidence" value="ECO:0000314"/>
    <property type="project" value="HPA"/>
</dbReference>
<dbReference type="GO" id="GO:0005634">
    <property type="term" value="C:nucleus"/>
    <property type="evidence" value="ECO:0000303"/>
    <property type="project" value="UniProtKB"/>
</dbReference>
<dbReference type="GO" id="GO:0005543">
    <property type="term" value="F:phospholipid binding"/>
    <property type="evidence" value="ECO:0000303"/>
    <property type="project" value="UniProtKB"/>
</dbReference>
<dbReference type="GO" id="GO:0008431">
    <property type="term" value="F:vitamin E binding"/>
    <property type="evidence" value="ECO:0000303"/>
    <property type="project" value="UniProtKB"/>
</dbReference>
<dbReference type="GO" id="GO:0045893">
    <property type="term" value="P:positive regulation of DNA-templated transcription"/>
    <property type="evidence" value="ECO:0000303"/>
    <property type="project" value="UniProtKB"/>
</dbReference>
<dbReference type="GO" id="GO:0045540">
    <property type="term" value="P:regulation of cholesterol biosynthetic process"/>
    <property type="evidence" value="ECO:0000303"/>
    <property type="project" value="UniProtKB"/>
</dbReference>
<dbReference type="CDD" id="cd00170">
    <property type="entry name" value="SEC14"/>
    <property type="match status" value="1"/>
</dbReference>
<dbReference type="FunFam" id="3.40.525.10:FF:000009">
    <property type="entry name" value="SEC14-like 2 (S. cerevisiae)"/>
    <property type="match status" value="1"/>
</dbReference>
<dbReference type="FunFam" id="2.60.120.680:FF:000001">
    <property type="entry name" value="SEC14-like protein 2 isoform X1"/>
    <property type="match status" value="1"/>
</dbReference>
<dbReference type="Gene3D" id="3.40.525.10">
    <property type="entry name" value="CRAL-TRIO lipid binding domain"/>
    <property type="match status" value="1"/>
</dbReference>
<dbReference type="Gene3D" id="2.60.120.680">
    <property type="entry name" value="GOLD domain"/>
    <property type="match status" value="1"/>
</dbReference>
<dbReference type="InterPro" id="IPR001251">
    <property type="entry name" value="CRAL-TRIO_dom"/>
</dbReference>
<dbReference type="InterPro" id="IPR036865">
    <property type="entry name" value="CRAL-TRIO_dom_sf"/>
</dbReference>
<dbReference type="InterPro" id="IPR011074">
    <property type="entry name" value="CRAL/TRIO_N_dom"/>
</dbReference>
<dbReference type="InterPro" id="IPR036273">
    <property type="entry name" value="CRAL/TRIO_N_dom_sf"/>
</dbReference>
<dbReference type="InterPro" id="IPR009038">
    <property type="entry name" value="GOLD_dom"/>
</dbReference>
<dbReference type="InterPro" id="IPR036598">
    <property type="entry name" value="GOLD_dom_sf"/>
</dbReference>
<dbReference type="InterPro" id="IPR051064">
    <property type="entry name" value="SEC14/CRAL-TRIO_domain"/>
</dbReference>
<dbReference type="PANTHER" id="PTHR23324">
    <property type="entry name" value="SEC14 RELATED PROTEIN"/>
    <property type="match status" value="1"/>
</dbReference>
<dbReference type="PANTHER" id="PTHR23324:SF90">
    <property type="entry name" value="SEC14-LIKE PROTEIN 2"/>
    <property type="match status" value="1"/>
</dbReference>
<dbReference type="Pfam" id="PF00650">
    <property type="entry name" value="CRAL_TRIO"/>
    <property type="match status" value="1"/>
</dbReference>
<dbReference type="Pfam" id="PF03765">
    <property type="entry name" value="CRAL_TRIO_N"/>
    <property type="match status" value="1"/>
</dbReference>
<dbReference type="PRINTS" id="PR00180">
    <property type="entry name" value="CRETINALDHBP"/>
</dbReference>
<dbReference type="SMART" id="SM01100">
    <property type="entry name" value="CRAL_TRIO_N"/>
    <property type="match status" value="1"/>
</dbReference>
<dbReference type="SMART" id="SM00516">
    <property type="entry name" value="SEC14"/>
    <property type="match status" value="1"/>
</dbReference>
<dbReference type="SUPFAM" id="SSF52087">
    <property type="entry name" value="CRAL/TRIO domain"/>
    <property type="match status" value="1"/>
</dbReference>
<dbReference type="SUPFAM" id="SSF46938">
    <property type="entry name" value="CRAL/TRIO N-terminal domain"/>
    <property type="match status" value="1"/>
</dbReference>
<dbReference type="SUPFAM" id="SSF101576">
    <property type="entry name" value="Supernatant protein factor (SPF), C-terminal domain"/>
    <property type="match status" value="1"/>
</dbReference>
<dbReference type="PROSITE" id="PS50191">
    <property type="entry name" value="CRAL_TRIO"/>
    <property type="match status" value="1"/>
</dbReference>
<dbReference type="PROSITE" id="PS50866">
    <property type="entry name" value="GOLD"/>
    <property type="match status" value="1"/>
</dbReference>
<gene>
    <name type="primary">SEC14L2</name>
    <name type="synonym">C22orf6</name>
    <name type="synonym">KIAA1186</name>
    <name type="synonym">KIAA1658</name>
</gene>
<reference key="1">
    <citation type="journal article" date="2000" name="J. Biol. Chem.">
        <title>A novel human tocopherol-associated protein: cloning, in vitro expression, and characterization.</title>
        <authorList>
            <person name="Zimmer S."/>
            <person name="Stocker A."/>
            <person name="Sarbolouki M.N."/>
            <person name="Spycher S.E."/>
            <person name="Sassoon J."/>
            <person name="Azzi A."/>
        </authorList>
    </citation>
    <scope>NUCLEOTIDE SEQUENCE [MRNA] (ISOFORM 1)</scope>
    <scope>TISSUE SPECIFICITY</scope>
    <scope>CHARACTERIZATION</scope>
</reference>
<reference key="2">
    <citation type="journal article" date="2001" name="Biochem. Biophys. Res. Commun.">
        <title>Tocopherol-associated protein is a ligand-dependent transcriptional activator.</title>
        <authorList>
            <person name="Yamauchi J."/>
            <person name="Iwamoto T."/>
            <person name="Kida S."/>
            <person name="Masushige S."/>
            <person name="Yamada K."/>
            <person name="Esashi T."/>
        </authorList>
    </citation>
    <scope>NUCLEOTIDE SEQUENCE [MRNA] (ISOFORM 1)</scope>
    <scope>CHARACTERIZATION</scope>
    <source>
        <tissue>Liver</tissue>
    </source>
</reference>
<reference key="3">
    <citation type="journal article" date="2001" name="Proc. Natl. Acad. Sci. U.S.A.">
        <title>Supernatant protein factor, which stimulates the conversion of squalene to lanosterol, is a cytosolic squalene transfer protein and enhances cholesterol biosynthesis.</title>
        <authorList>
            <person name="Shibata N."/>
            <person name="Arita M."/>
            <person name="Misaki Y."/>
            <person name="Dohmae N."/>
            <person name="Takio K."/>
            <person name="Ono T."/>
            <person name="Inoue K."/>
            <person name="Arai H."/>
        </authorList>
    </citation>
    <scope>NUCLEOTIDE SEQUENCE [MRNA] (ISOFORM 1)</scope>
    <scope>CHARACTERIZATION</scope>
    <source>
        <tissue>Liver</tissue>
    </source>
</reference>
<reference key="4">
    <citation type="journal article" date="1999" name="DNA Res.">
        <title>Characterization of cDNA clones selected by the GeneMark analysis from size-fractionated cDNA libraries from human brain.</title>
        <authorList>
            <person name="Hirosawa M."/>
            <person name="Nagase T."/>
            <person name="Ishikawa K."/>
            <person name="Kikuno R."/>
            <person name="Nomura N."/>
            <person name="Ohara O."/>
        </authorList>
    </citation>
    <scope>NUCLEOTIDE SEQUENCE [LARGE SCALE MRNA] (ISOFORM 1)</scope>
    <source>
        <tissue>Brain</tissue>
    </source>
</reference>
<reference key="5">
    <citation type="submission" date="2005-01" db="EMBL/GenBank/DDBJ databases">
        <authorList>
            <person name="Ohara O."/>
            <person name="Nagase T."/>
            <person name="Kikuno R."/>
        </authorList>
    </citation>
    <scope>SEQUENCE REVISION</scope>
</reference>
<reference key="6">
    <citation type="journal article" date="2004" name="Genome Biol.">
        <title>A genome annotation-driven approach to cloning the human ORFeome.</title>
        <authorList>
            <person name="Collins J.E."/>
            <person name="Wright C.L."/>
            <person name="Edwards C.A."/>
            <person name="Davis M.P."/>
            <person name="Grinham J.A."/>
            <person name="Cole C.G."/>
            <person name="Goward M.E."/>
            <person name="Aguado B."/>
            <person name="Mallya M."/>
            <person name="Mokrab Y."/>
            <person name="Huckle E.J."/>
            <person name="Beare D.M."/>
            <person name="Dunham I."/>
        </authorList>
    </citation>
    <scope>NUCLEOTIDE SEQUENCE [LARGE SCALE MRNA] (ISOFORM 1)</scope>
</reference>
<reference key="7">
    <citation type="journal article" date="2004" name="Nat. Genet.">
        <title>Complete sequencing and characterization of 21,243 full-length human cDNAs.</title>
        <authorList>
            <person name="Ota T."/>
            <person name="Suzuki Y."/>
            <person name="Nishikawa T."/>
            <person name="Otsuki T."/>
            <person name="Sugiyama T."/>
            <person name="Irie R."/>
            <person name="Wakamatsu A."/>
            <person name="Hayashi K."/>
            <person name="Sato H."/>
            <person name="Nagai K."/>
            <person name="Kimura K."/>
            <person name="Makita H."/>
            <person name="Sekine M."/>
            <person name="Obayashi M."/>
            <person name="Nishi T."/>
            <person name="Shibahara T."/>
            <person name="Tanaka T."/>
            <person name="Ishii S."/>
            <person name="Yamamoto J."/>
            <person name="Saito K."/>
            <person name="Kawai Y."/>
            <person name="Isono Y."/>
            <person name="Nakamura Y."/>
            <person name="Nagahari K."/>
            <person name="Murakami K."/>
            <person name="Yasuda T."/>
            <person name="Iwayanagi T."/>
            <person name="Wagatsuma M."/>
            <person name="Shiratori A."/>
            <person name="Sudo H."/>
            <person name="Hosoiri T."/>
            <person name="Kaku Y."/>
            <person name="Kodaira H."/>
            <person name="Kondo H."/>
            <person name="Sugawara M."/>
            <person name="Takahashi M."/>
            <person name="Kanda K."/>
            <person name="Yokoi T."/>
            <person name="Furuya T."/>
            <person name="Kikkawa E."/>
            <person name="Omura Y."/>
            <person name="Abe K."/>
            <person name="Kamihara K."/>
            <person name="Katsuta N."/>
            <person name="Sato K."/>
            <person name="Tanikawa M."/>
            <person name="Yamazaki M."/>
            <person name="Ninomiya K."/>
            <person name="Ishibashi T."/>
            <person name="Yamashita H."/>
            <person name="Murakawa K."/>
            <person name="Fujimori K."/>
            <person name="Tanai H."/>
            <person name="Kimata M."/>
            <person name="Watanabe M."/>
            <person name="Hiraoka S."/>
            <person name="Chiba Y."/>
            <person name="Ishida S."/>
            <person name="Ono Y."/>
            <person name="Takiguchi S."/>
            <person name="Watanabe S."/>
            <person name="Yosida M."/>
            <person name="Hotuta T."/>
            <person name="Kusano J."/>
            <person name="Kanehori K."/>
            <person name="Takahashi-Fujii A."/>
            <person name="Hara H."/>
            <person name="Tanase T.-O."/>
            <person name="Nomura Y."/>
            <person name="Togiya S."/>
            <person name="Komai F."/>
            <person name="Hara R."/>
            <person name="Takeuchi K."/>
            <person name="Arita M."/>
            <person name="Imose N."/>
            <person name="Musashino K."/>
            <person name="Yuuki H."/>
            <person name="Oshima A."/>
            <person name="Sasaki N."/>
            <person name="Aotsuka S."/>
            <person name="Yoshikawa Y."/>
            <person name="Matsunawa H."/>
            <person name="Ichihara T."/>
            <person name="Shiohata N."/>
            <person name="Sano S."/>
            <person name="Moriya S."/>
            <person name="Momiyama H."/>
            <person name="Satoh N."/>
            <person name="Takami S."/>
            <person name="Terashima Y."/>
            <person name="Suzuki O."/>
            <person name="Nakagawa S."/>
            <person name="Senoh A."/>
            <person name="Mizoguchi H."/>
            <person name="Goto Y."/>
            <person name="Shimizu F."/>
            <person name="Wakebe H."/>
            <person name="Hishigaki H."/>
            <person name="Watanabe T."/>
            <person name="Sugiyama A."/>
            <person name="Takemoto M."/>
            <person name="Kawakami B."/>
            <person name="Yamazaki M."/>
            <person name="Watanabe K."/>
            <person name="Kumagai A."/>
            <person name="Itakura S."/>
            <person name="Fukuzumi Y."/>
            <person name="Fujimori Y."/>
            <person name="Komiyama M."/>
            <person name="Tashiro H."/>
            <person name="Tanigami A."/>
            <person name="Fujiwara T."/>
            <person name="Ono T."/>
            <person name="Yamada K."/>
            <person name="Fujii Y."/>
            <person name="Ozaki K."/>
            <person name="Hirao M."/>
            <person name="Ohmori Y."/>
            <person name="Kawabata A."/>
            <person name="Hikiji T."/>
            <person name="Kobatake N."/>
            <person name="Inagaki H."/>
            <person name="Ikema Y."/>
            <person name="Okamoto S."/>
            <person name="Okitani R."/>
            <person name="Kawakami T."/>
            <person name="Noguchi S."/>
            <person name="Itoh T."/>
            <person name="Shigeta K."/>
            <person name="Senba T."/>
            <person name="Matsumura K."/>
            <person name="Nakajima Y."/>
            <person name="Mizuno T."/>
            <person name="Morinaga M."/>
            <person name="Sasaki M."/>
            <person name="Togashi T."/>
            <person name="Oyama M."/>
            <person name="Hata H."/>
            <person name="Watanabe M."/>
            <person name="Komatsu T."/>
            <person name="Mizushima-Sugano J."/>
            <person name="Satoh T."/>
            <person name="Shirai Y."/>
            <person name="Takahashi Y."/>
            <person name="Nakagawa K."/>
            <person name="Okumura K."/>
            <person name="Nagase T."/>
            <person name="Nomura N."/>
            <person name="Kikuchi H."/>
            <person name="Masuho Y."/>
            <person name="Yamashita R."/>
            <person name="Nakai K."/>
            <person name="Yada T."/>
            <person name="Nakamura Y."/>
            <person name="Ohara O."/>
            <person name="Isogai T."/>
            <person name="Sugano S."/>
        </authorList>
    </citation>
    <scope>NUCLEOTIDE SEQUENCE [LARGE SCALE MRNA] (ISOFORM 3)</scope>
    <scope>VARIANT LYS-11</scope>
    <source>
        <tissue>Liver</tissue>
    </source>
</reference>
<reference key="8">
    <citation type="submission" date="2005-04" db="EMBL/GenBank/DDBJ databases">
        <authorList>
            <person name="Totoki Y."/>
            <person name="Toyoda A."/>
            <person name="Takeda T."/>
            <person name="Sakaki Y."/>
            <person name="Tanaka A."/>
            <person name="Yokoyama S."/>
        </authorList>
    </citation>
    <scope>NUCLEOTIDE SEQUENCE [LARGE SCALE MRNA] (ISOFORM 1)</scope>
    <scope>VARIANT LYS-11</scope>
    <source>
        <tissue>Kidney</tissue>
    </source>
</reference>
<reference key="9">
    <citation type="journal article" date="1999" name="Nature">
        <title>The DNA sequence of human chromosome 22.</title>
        <authorList>
            <person name="Dunham I."/>
            <person name="Hunt A.R."/>
            <person name="Collins J.E."/>
            <person name="Bruskiewich R."/>
            <person name="Beare D.M."/>
            <person name="Clamp M."/>
            <person name="Smink L.J."/>
            <person name="Ainscough R."/>
            <person name="Almeida J.P."/>
            <person name="Babbage A.K."/>
            <person name="Bagguley C."/>
            <person name="Bailey J."/>
            <person name="Barlow K.F."/>
            <person name="Bates K.N."/>
            <person name="Beasley O.P."/>
            <person name="Bird C.P."/>
            <person name="Blakey S.E."/>
            <person name="Bridgeman A.M."/>
            <person name="Buck D."/>
            <person name="Burgess J."/>
            <person name="Burrill W.D."/>
            <person name="Burton J."/>
            <person name="Carder C."/>
            <person name="Carter N.P."/>
            <person name="Chen Y."/>
            <person name="Clark G."/>
            <person name="Clegg S.M."/>
            <person name="Cobley V.E."/>
            <person name="Cole C.G."/>
            <person name="Collier R.E."/>
            <person name="Connor R."/>
            <person name="Conroy D."/>
            <person name="Corby N.R."/>
            <person name="Coville G.J."/>
            <person name="Cox A.V."/>
            <person name="Davis J."/>
            <person name="Dawson E."/>
            <person name="Dhami P.D."/>
            <person name="Dockree C."/>
            <person name="Dodsworth S.J."/>
            <person name="Durbin R.M."/>
            <person name="Ellington A.G."/>
            <person name="Evans K.L."/>
            <person name="Fey J.M."/>
            <person name="Fleming K."/>
            <person name="French L."/>
            <person name="Garner A.A."/>
            <person name="Gilbert J.G.R."/>
            <person name="Goward M.E."/>
            <person name="Grafham D.V."/>
            <person name="Griffiths M.N.D."/>
            <person name="Hall C."/>
            <person name="Hall R.E."/>
            <person name="Hall-Tamlyn G."/>
            <person name="Heathcott R.W."/>
            <person name="Ho S."/>
            <person name="Holmes S."/>
            <person name="Hunt S.E."/>
            <person name="Jones M.C."/>
            <person name="Kershaw J."/>
            <person name="Kimberley A.M."/>
            <person name="King A."/>
            <person name="Laird G.K."/>
            <person name="Langford C.F."/>
            <person name="Leversha M.A."/>
            <person name="Lloyd C."/>
            <person name="Lloyd D.M."/>
            <person name="Martyn I.D."/>
            <person name="Mashreghi-Mohammadi M."/>
            <person name="Matthews L.H."/>
            <person name="Mccann O.T."/>
            <person name="Mcclay J."/>
            <person name="Mclaren S."/>
            <person name="McMurray A.A."/>
            <person name="Milne S.A."/>
            <person name="Mortimore B.J."/>
            <person name="Odell C.N."/>
            <person name="Pavitt R."/>
            <person name="Pearce A.V."/>
            <person name="Pearson D."/>
            <person name="Phillimore B.J.C.T."/>
            <person name="Phillips S.H."/>
            <person name="Plumb R.W."/>
            <person name="Ramsay H."/>
            <person name="Ramsey Y."/>
            <person name="Rogers L."/>
            <person name="Ross M.T."/>
            <person name="Scott C.E."/>
            <person name="Sehra H.K."/>
            <person name="Skuce C.D."/>
            <person name="Smalley S."/>
            <person name="Smith M.L."/>
            <person name="Soderlund C."/>
            <person name="Spragon L."/>
            <person name="Steward C.A."/>
            <person name="Sulston J.E."/>
            <person name="Swann R.M."/>
            <person name="Vaudin M."/>
            <person name="Wall M."/>
            <person name="Wallis J.M."/>
            <person name="Whiteley M.N."/>
            <person name="Willey D.L."/>
            <person name="Williams L."/>
            <person name="Williams S.A."/>
            <person name="Williamson H."/>
            <person name="Wilmer T.E."/>
            <person name="Wilming L."/>
            <person name="Wright C.L."/>
            <person name="Hubbard T."/>
            <person name="Bentley D.R."/>
            <person name="Beck S."/>
            <person name="Rogers J."/>
            <person name="Shimizu N."/>
            <person name="Minoshima S."/>
            <person name="Kawasaki K."/>
            <person name="Sasaki T."/>
            <person name="Asakawa S."/>
            <person name="Kudoh J."/>
            <person name="Shintani A."/>
            <person name="Shibuya K."/>
            <person name="Yoshizaki Y."/>
            <person name="Aoki N."/>
            <person name="Mitsuyama S."/>
            <person name="Roe B.A."/>
            <person name="Chen F."/>
            <person name="Chu L."/>
            <person name="Crabtree J."/>
            <person name="Deschamps S."/>
            <person name="Do A."/>
            <person name="Do T."/>
            <person name="Dorman A."/>
            <person name="Fang F."/>
            <person name="Fu Y."/>
            <person name="Hu P."/>
            <person name="Hua A."/>
            <person name="Kenton S."/>
            <person name="Lai H."/>
            <person name="Lao H.I."/>
            <person name="Lewis J."/>
            <person name="Lewis S."/>
            <person name="Lin S.-P."/>
            <person name="Loh P."/>
            <person name="Malaj E."/>
            <person name="Nguyen T."/>
            <person name="Pan H."/>
            <person name="Phan S."/>
            <person name="Qi S."/>
            <person name="Qian Y."/>
            <person name="Ray L."/>
            <person name="Ren Q."/>
            <person name="Shaull S."/>
            <person name="Sloan D."/>
            <person name="Song L."/>
            <person name="Wang Q."/>
            <person name="Wang Y."/>
            <person name="Wang Z."/>
            <person name="White J."/>
            <person name="Willingham D."/>
            <person name="Wu H."/>
            <person name="Yao Z."/>
            <person name="Zhan M."/>
            <person name="Zhang G."/>
            <person name="Chissoe S."/>
            <person name="Murray J."/>
            <person name="Miller N."/>
            <person name="Minx P."/>
            <person name="Fulton R."/>
            <person name="Johnson D."/>
            <person name="Bemis G."/>
            <person name="Bentley D."/>
            <person name="Bradshaw H."/>
            <person name="Bourne S."/>
            <person name="Cordes M."/>
            <person name="Du Z."/>
            <person name="Fulton L."/>
            <person name="Goela D."/>
            <person name="Graves T."/>
            <person name="Hawkins J."/>
            <person name="Hinds K."/>
            <person name="Kemp K."/>
            <person name="Latreille P."/>
            <person name="Layman D."/>
            <person name="Ozersky P."/>
            <person name="Rohlfing T."/>
            <person name="Scheet P."/>
            <person name="Walker C."/>
            <person name="Wamsley A."/>
            <person name="Wohldmann P."/>
            <person name="Pepin K."/>
            <person name="Nelson J."/>
            <person name="Korf I."/>
            <person name="Bedell J.A."/>
            <person name="Hillier L.W."/>
            <person name="Mardis E."/>
            <person name="Waterston R."/>
            <person name="Wilson R."/>
            <person name="Emanuel B.S."/>
            <person name="Shaikh T."/>
            <person name="Kurahashi H."/>
            <person name="Saitta S."/>
            <person name="Budarf M.L."/>
            <person name="McDermid H.E."/>
            <person name="Johnson A."/>
            <person name="Wong A.C.C."/>
            <person name="Morrow B.E."/>
            <person name="Edelmann L."/>
            <person name="Kim U.J."/>
            <person name="Shizuya H."/>
            <person name="Simon M.I."/>
            <person name="Dumanski J.P."/>
            <person name="Peyrard M."/>
            <person name="Kedra D."/>
            <person name="Seroussi E."/>
            <person name="Fransson I."/>
            <person name="Tapia I."/>
            <person name="Bruder C.E."/>
            <person name="O'Brien K.P."/>
            <person name="Wilkinson P."/>
            <person name="Bodenteich A."/>
            <person name="Hartman K."/>
            <person name="Hu X."/>
            <person name="Khan A.S."/>
            <person name="Lane L."/>
            <person name="Tilahun Y."/>
            <person name="Wright H."/>
        </authorList>
    </citation>
    <scope>NUCLEOTIDE SEQUENCE [LARGE SCALE GENOMIC DNA]</scope>
</reference>
<reference key="10">
    <citation type="journal article" date="2004" name="Genome Res.">
        <title>The status, quality, and expansion of the NIH full-length cDNA project: the Mammalian Gene Collection (MGC).</title>
        <authorList>
            <consortium name="The MGC Project Team"/>
        </authorList>
    </citation>
    <scope>NUCLEOTIDE SEQUENCE [LARGE SCALE MRNA] (ISOFORM 2)</scope>
    <source>
        <tissue>Brain</tissue>
    </source>
</reference>
<reference key="11">
    <citation type="journal article" date="2014" name="J. Proteomics">
        <title>An enzyme assisted RP-RPLC approach for in-depth analysis of human liver phosphoproteome.</title>
        <authorList>
            <person name="Bian Y."/>
            <person name="Song C."/>
            <person name="Cheng K."/>
            <person name="Dong M."/>
            <person name="Wang F."/>
            <person name="Huang J."/>
            <person name="Sun D."/>
            <person name="Wang L."/>
            <person name="Ye M."/>
            <person name="Zou H."/>
        </authorList>
    </citation>
    <scope>IDENTIFICATION BY MASS SPECTROMETRY [LARGE SCALE ANALYSIS]</scope>
    <source>
        <tissue>Liver</tissue>
    </source>
</reference>
<reference key="12">
    <citation type="journal article" date="2002" name="Structure">
        <title>Crystal structure of the human supernatant protein factor.</title>
        <authorList>
            <person name="Stocker A."/>
            <person name="Tomizaki T."/>
            <person name="Schulze-Briese C."/>
            <person name="Baumann U."/>
        </authorList>
    </citation>
    <scope>X-RAY CRYSTALLOGRAPHY (1.9 ANGSTROMS)</scope>
</reference>
<name>S14L2_HUMAN</name>
<organism>
    <name type="scientific">Homo sapiens</name>
    <name type="common">Human</name>
    <dbReference type="NCBI Taxonomy" id="9606"/>
    <lineage>
        <taxon>Eukaryota</taxon>
        <taxon>Metazoa</taxon>
        <taxon>Chordata</taxon>
        <taxon>Craniata</taxon>
        <taxon>Vertebrata</taxon>
        <taxon>Euteleostomi</taxon>
        <taxon>Mammalia</taxon>
        <taxon>Eutheria</taxon>
        <taxon>Euarchontoglires</taxon>
        <taxon>Primates</taxon>
        <taxon>Haplorrhini</taxon>
        <taxon>Catarrhini</taxon>
        <taxon>Hominidae</taxon>
        <taxon>Homo</taxon>
    </lineage>
</organism>
<protein>
    <recommendedName>
        <fullName>SEC14-like protein 2</fullName>
    </recommendedName>
    <alternativeName>
        <fullName>Alpha-tocopherol-associated protein</fullName>
        <shortName>TAP</shortName>
        <shortName>hTAP</shortName>
    </alternativeName>
    <alternativeName>
        <fullName>Squalene transfer protein</fullName>
    </alternativeName>
    <alternativeName>
        <fullName>Supernatant protein factor</fullName>
        <shortName>SPF</shortName>
    </alternativeName>
</protein>